<keyword id="KW-1185">Reference proteome</keyword>
<keyword id="KW-0687">Ribonucleoprotein</keyword>
<keyword id="KW-0689">Ribosomal protein</keyword>
<keyword id="KW-0694">RNA-binding</keyword>
<keyword id="KW-0699">rRNA-binding</keyword>
<evidence type="ECO:0000255" key="1">
    <source>
        <dbReference type="HAMAP-Rule" id="MF_01341"/>
    </source>
</evidence>
<evidence type="ECO:0000256" key="2">
    <source>
        <dbReference type="SAM" id="MobiDB-lite"/>
    </source>
</evidence>
<evidence type="ECO:0000305" key="3"/>
<gene>
    <name evidence="1" type="primary">rplO</name>
    <name type="ordered locus">Hore_01350</name>
</gene>
<feature type="chain" id="PRO_1000166300" description="Large ribosomal subunit protein uL15">
    <location>
        <begin position="1"/>
        <end position="147"/>
    </location>
</feature>
<feature type="region of interest" description="Disordered" evidence="2">
    <location>
        <begin position="1"/>
        <end position="57"/>
    </location>
</feature>
<feature type="compositionally biased region" description="Basic and acidic residues" evidence="2">
    <location>
        <begin position="1"/>
        <end position="11"/>
    </location>
</feature>
<feature type="compositionally biased region" description="Gly residues" evidence="2">
    <location>
        <begin position="21"/>
        <end position="35"/>
    </location>
</feature>
<reference key="1">
    <citation type="journal article" date="2009" name="PLoS ONE">
        <title>Genome analysis of the anaerobic thermohalophilic bacterium Halothermothrix orenii.</title>
        <authorList>
            <person name="Mavromatis K."/>
            <person name="Ivanova N."/>
            <person name="Anderson I."/>
            <person name="Lykidis A."/>
            <person name="Hooper S.D."/>
            <person name="Sun H."/>
            <person name="Kunin V."/>
            <person name="Lapidus A."/>
            <person name="Hugenholtz P."/>
            <person name="Patel B."/>
            <person name="Kyrpides N.C."/>
        </authorList>
    </citation>
    <scope>NUCLEOTIDE SEQUENCE [LARGE SCALE GENOMIC DNA]</scope>
    <source>
        <strain>H 168 / OCM 544 / DSM 9562</strain>
    </source>
</reference>
<proteinExistence type="inferred from homology"/>
<name>RL15_HALOH</name>
<sequence length="147" mass="15992">MKLHDLRPAKDAKKKRKRVGRGTGSGRGFTSGRGSKGQNARSGGGVRPTFEGGQTPLFRKLPKKGFNNIFKKVYNEVNVYQLNKFNKGEEVTPEKLLEKGIIDKVARSGVKILGNGELDKALTVKAHAFTKSAREKIEAAGGKAEVI</sequence>
<accession>B8D0E2</accession>
<comment type="function">
    <text evidence="1">Binds to the 23S rRNA.</text>
</comment>
<comment type="subunit">
    <text evidence="1">Part of the 50S ribosomal subunit.</text>
</comment>
<comment type="similarity">
    <text evidence="1">Belongs to the universal ribosomal protein uL15 family.</text>
</comment>
<organism>
    <name type="scientific">Halothermothrix orenii (strain H 168 / OCM 544 / DSM 9562)</name>
    <dbReference type="NCBI Taxonomy" id="373903"/>
    <lineage>
        <taxon>Bacteria</taxon>
        <taxon>Bacillati</taxon>
        <taxon>Bacillota</taxon>
        <taxon>Clostridia</taxon>
        <taxon>Halanaerobiales</taxon>
        <taxon>Halothermotrichaceae</taxon>
        <taxon>Halothermothrix</taxon>
    </lineage>
</organism>
<protein>
    <recommendedName>
        <fullName evidence="1">Large ribosomal subunit protein uL15</fullName>
    </recommendedName>
    <alternativeName>
        <fullName evidence="3">50S ribosomal protein L15</fullName>
    </alternativeName>
</protein>
<dbReference type="EMBL" id="CP001098">
    <property type="protein sequence ID" value="ACL68896.1"/>
    <property type="molecule type" value="Genomic_DNA"/>
</dbReference>
<dbReference type="RefSeq" id="WP_012635094.1">
    <property type="nucleotide sequence ID" value="NC_011899.1"/>
</dbReference>
<dbReference type="SMR" id="B8D0E2"/>
<dbReference type="STRING" id="373903.Hore_01350"/>
<dbReference type="KEGG" id="hor:Hore_01350"/>
<dbReference type="eggNOG" id="COG0200">
    <property type="taxonomic scope" value="Bacteria"/>
</dbReference>
<dbReference type="HOGENOM" id="CLU_055188_4_2_9"/>
<dbReference type="OrthoDB" id="9810293at2"/>
<dbReference type="Proteomes" id="UP000000719">
    <property type="component" value="Chromosome"/>
</dbReference>
<dbReference type="GO" id="GO:0022625">
    <property type="term" value="C:cytosolic large ribosomal subunit"/>
    <property type="evidence" value="ECO:0007669"/>
    <property type="project" value="TreeGrafter"/>
</dbReference>
<dbReference type="GO" id="GO:0019843">
    <property type="term" value="F:rRNA binding"/>
    <property type="evidence" value="ECO:0007669"/>
    <property type="project" value="UniProtKB-UniRule"/>
</dbReference>
<dbReference type="GO" id="GO:0003735">
    <property type="term" value="F:structural constituent of ribosome"/>
    <property type="evidence" value="ECO:0007669"/>
    <property type="project" value="InterPro"/>
</dbReference>
<dbReference type="GO" id="GO:0006412">
    <property type="term" value="P:translation"/>
    <property type="evidence" value="ECO:0007669"/>
    <property type="project" value="UniProtKB-UniRule"/>
</dbReference>
<dbReference type="Gene3D" id="3.100.10.10">
    <property type="match status" value="1"/>
</dbReference>
<dbReference type="HAMAP" id="MF_01341">
    <property type="entry name" value="Ribosomal_uL15"/>
    <property type="match status" value="1"/>
</dbReference>
<dbReference type="InterPro" id="IPR030878">
    <property type="entry name" value="Ribosomal_uL15"/>
</dbReference>
<dbReference type="InterPro" id="IPR021131">
    <property type="entry name" value="Ribosomal_uL15/eL18"/>
</dbReference>
<dbReference type="InterPro" id="IPR036227">
    <property type="entry name" value="Ribosomal_uL15/eL18_sf"/>
</dbReference>
<dbReference type="InterPro" id="IPR005749">
    <property type="entry name" value="Ribosomal_uL15_bac-type"/>
</dbReference>
<dbReference type="InterPro" id="IPR001196">
    <property type="entry name" value="Ribosomal_uL15_CS"/>
</dbReference>
<dbReference type="NCBIfam" id="TIGR01071">
    <property type="entry name" value="rplO_bact"/>
    <property type="match status" value="1"/>
</dbReference>
<dbReference type="PANTHER" id="PTHR12934">
    <property type="entry name" value="50S RIBOSOMAL PROTEIN L15"/>
    <property type="match status" value="1"/>
</dbReference>
<dbReference type="PANTHER" id="PTHR12934:SF11">
    <property type="entry name" value="LARGE RIBOSOMAL SUBUNIT PROTEIN UL15M"/>
    <property type="match status" value="1"/>
</dbReference>
<dbReference type="Pfam" id="PF00828">
    <property type="entry name" value="Ribosomal_L27A"/>
    <property type="match status" value="1"/>
</dbReference>
<dbReference type="SUPFAM" id="SSF52080">
    <property type="entry name" value="Ribosomal proteins L15p and L18e"/>
    <property type="match status" value="1"/>
</dbReference>
<dbReference type="PROSITE" id="PS00475">
    <property type="entry name" value="RIBOSOMAL_L15"/>
    <property type="match status" value="1"/>
</dbReference>